<name>UPP_CLOTE</name>
<proteinExistence type="inferred from homology"/>
<evidence type="ECO:0000255" key="1">
    <source>
        <dbReference type="HAMAP-Rule" id="MF_01218"/>
    </source>
</evidence>
<sequence length="209" mass="22765">MSKVTQIAHPLILHKLTLIRDKNTGAKDFRELVEEVAMLMAYEVTRDFNLKEVEIETPICKTKSKVLAGKKVAIVPILRAGLGMVDGILKLIPAAKVGHIGLYRDEKTLTPVEYFCKLPQDIGEREIIVTDPMLATGGSAADAIALLKKRGAKYIRLVCLVAAPEGIKVVMDAHPDVDIYVASIDEKLDESGYIVPGLGDAGDRLFGTK</sequence>
<keyword id="KW-0021">Allosteric enzyme</keyword>
<keyword id="KW-0328">Glycosyltransferase</keyword>
<keyword id="KW-0342">GTP-binding</keyword>
<keyword id="KW-0460">Magnesium</keyword>
<keyword id="KW-0547">Nucleotide-binding</keyword>
<keyword id="KW-1185">Reference proteome</keyword>
<keyword id="KW-0808">Transferase</keyword>
<feature type="chain" id="PRO_0000120817" description="Uracil phosphoribosyltransferase">
    <location>
        <begin position="1"/>
        <end position="209"/>
    </location>
</feature>
<feature type="binding site" evidence="1">
    <location>
        <position position="79"/>
    </location>
    <ligand>
        <name>5-phospho-alpha-D-ribose 1-diphosphate</name>
        <dbReference type="ChEBI" id="CHEBI:58017"/>
    </ligand>
</feature>
<feature type="binding site" evidence="1">
    <location>
        <position position="104"/>
    </location>
    <ligand>
        <name>5-phospho-alpha-D-ribose 1-diphosphate</name>
        <dbReference type="ChEBI" id="CHEBI:58017"/>
    </ligand>
</feature>
<feature type="binding site" evidence="1">
    <location>
        <begin position="131"/>
        <end position="139"/>
    </location>
    <ligand>
        <name>5-phospho-alpha-D-ribose 1-diphosphate</name>
        <dbReference type="ChEBI" id="CHEBI:58017"/>
    </ligand>
</feature>
<feature type="binding site" evidence="1">
    <location>
        <position position="194"/>
    </location>
    <ligand>
        <name>uracil</name>
        <dbReference type="ChEBI" id="CHEBI:17568"/>
    </ligand>
</feature>
<feature type="binding site" evidence="1">
    <location>
        <begin position="199"/>
        <end position="201"/>
    </location>
    <ligand>
        <name>uracil</name>
        <dbReference type="ChEBI" id="CHEBI:17568"/>
    </ligand>
</feature>
<feature type="binding site" evidence="1">
    <location>
        <position position="200"/>
    </location>
    <ligand>
        <name>5-phospho-alpha-D-ribose 1-diphosphate</name>
        <dbReference type="ChEBI" id="CHEBI:58017"/>
    </ligand>
</feature>
<gene>
    <name evidence="1" type="primary">upp</name>
    <name type="ordered locus">CTC_00308</name>
</gene>
<comment type="function">
    <text evidence="1">Catalyzes the conversion of uracil and 5-phospho-alpha-D-ribose 1-diphosphate (PRPP) to UMP and diphosphate.</text>
</comment>
<comment type="catalytic activity">
    <reaction evidence="1">
        <text>UMP + diphosphate = 5-phospho-alpha-D-ribose 1-diphosphate + uracil</text>
        <dbReference type="Rhea" id="RHEA:13017"/>
        <dbReference type="ChEBI" id="CHEBI:17568"/>
        <dbReference type="ChEBI" id="CHEBI:33019"/>
        <dbReference type="ChEBI" id="CHEBI:57865"/>
        <dbReference type="ChEBI" id="CHEBI:58017"/>
        <dbReference type="EC" id="2.4.2.9"/>
    </reaction>
</comment>
<comment type="cofactor">
    <cofactor evidence="1">
        <name>Mg(2+)</name>
        <dbReference type="ChEBI" id="CHEBI:18420"/>
    </cofactor>
    <text evidence="1">Binds 1 Mg(2+) ion per subunit. The magnesium is bound as Mg-PRPP.</text>
</comment>
<comment type="activity regulation">
    <text evidence="1">Allosterically activated by GTP.</text>
</comment>
<comment type="pathway">
    <text evidence="1">Pyrimidine metabolism; UMP biosynthesis via salvage pathway; UMP from uracil: step 1/1.</text>
</comment>
<comment type="similarity">
    <text evidence="1">Belongs to the UPRTase family.</text>
</comment>
<accession>Q898X9</accession>
<reference key="1">
    <citation type="journal article" date="2003" name="Proc. Natl. Acad. Sci. U.S.A.">
        <title>The genome sequence of Clostridium tetani, the causative agent of tetanus disease.</title>
        <authorList>
            <person name="Brueggemann H."/>
            <person name="Baeumer S."/>
            <person name="Fricke W.F."/>
            <person name="Wiezer A."/>
            <person name="Liesegang H."/>
            <person name="Decker I."/>
            <person name="Herzberg C."/>
            <person name="Martinez-Arias R."/>
            <person name="Merkl R."/>
            <person name="Henne A."/>
            <person name="Gottschalk G."/>
        </authorList>
    </citation>
    <scope>NUCLEOTIDE SEQUENCE [LARGE SCALE GENOMIC DNA]</scope>
    <source>
        <strain>Massachusetts / E88</strain>
    </source>
</reference>
<organism>
    <name type="scientific">Clostridium tetani (strain Massachusetts / E88)</name>
    <dbReference type="NCBI Taxonomy" id="212717"/>
    <lineage>
        <taxon>Bacteria</taxon>
        <taxon>Bacillati</taxon>
        <taxon>Bacillota</taxon>
        <taxon>Clostridia</taxon>
        <taxon>Eubacteriales</taxon>
        <taxon>Clostridiaceae</taxon>
        <taxon>Clostridium</taxon>
    </lineage>
</organism>
<protein>
    <recommendedName>
        <fullName evidence="1">Uracil phosphoribosyltransferase</fullName>
        <ecNumber evidence="1">2.4.2.9</ecNumber>
    </recommendedName>
    <alternativeName>
        <fullName evidence="1">UMP pyrophosphorylase</fullName>
    </alternativeName>
    <alternativeName>
        <fullName evidence="1">UPRTase</fullName>
    </alternativeName>
</protein>
<dbReference type="EC" id="2.4.2.9" evidence="1"/>
<dbReference type="EMBL" id="AE015927">
    <property type="protein sequence ID" value="AAO34950.1"/>
    <property type="molecule type" value="Genomic_DNA"/>
</dbReference>
<dbReference type="RefSeq" id="WP_011098621.1">
    <property type="nucleotide sequence ID" value="NC_004557.1"/>
</dbReference>
<dbReference type="SMR" id="Q898X9"/>
<dbReference type="STRING" id="212717.CTC_00308"/>
<dbReference type="GeneID" id="24254616"/>
<dbReference type="KEGG" id="ctc:CTC_00308"/>
<dbReference type="HOGENOM" id="CLU_067096_2_2_9"/>
<dbReference type="OrthoDB" id="9781675at2"/>
<dbReference type="UniPathway" id="UPA00574">
    <property type="reaction ID" value="UER00636"/>
</dbReference>
<dbReference type="Proteomes" id="UP000001412">
    <property type="component" value="Chromosome"/>
</dbReference>
<dbReference type="GO" id="GO:0005525">
    <property type="term" value="F:GTP binding"/>
    <property type="evidence" value="ECO:0007669"/>
    <property type="project" value="UniProtKB-KW"/>
</dbReference>
<dbReference type="GO" id="GO:0000287">
    <property type="term" value="F:magnesium ion binding"/>
    <property type="evidence" value="ECO:0007669"/>
    <property type="project" value="UniProtKB-UniRule"/>
</dbReference>
<dbReference type="GO" id="GO:0004845">
    <property type="term" value="F:uracil phosphoribosyltransferase activity"/>
    <property type="evidence" value="ECO:0007669"/>
    <property type="project" value="UniProtKB-UniRule"/>
</dbReference>
<dbReference type="GO" id="GO:0044206">
    <property type="term" value="P:UMP salvage"/>
    <property type="evidence" value="ECO:0007669"/>
    <property type="project" value="UniProtKB-UniRule"/>
</dbReference>
<dbReference type="GO" id="GO:0006223">
    <property type="term" value="P:uracil salvage"/>
    <property type="evidence" value="ECO:0007669"/>
    <property type="project" value="InterPro"/>
</dbReference>
<dbReference type="CDD" id="cd06223">
    <property type="entry name" value="PRTases_typeI"/>
    <property type="match status" value="1"/>
</dbReference>
<dbReference type="FunFam" id="3.40.50.2020:FF:000003">
    <property type="entry name" value="Uracil phosphoribosyltransferase"/>
    <property type="match status" value="1"/>
</dbReference>
<dbReference type="Gene3D" id="3.40.50.2020">
    <property type="match status" value="1"/>
</dbReference>
<dbReference type="HAMAP" id="MF_01218_B">
    <property type="entry name" value="Upp_B"/>
    <property type="match status" value="1"/>
</dbReference>
<dbReference type="InterPro" id="IPR000836">
    <property type="entry name" value="PRibTrfase_dom"/>
</dbReference>
<dbReference type="InterPro" id="IPR029057">
    <property type="entry name" value="PRTase-like"/>
</dbReference>
<dbReference type="InterPro" id="IPR034332">
    <property type="entry name" value="Upp_B"/>
</dbReference>
<dbReference type="InterPro" id="IPR050054">
    <property type="entry name" value="UPRTase/APRTase"/>
</dbReference>
<dbReference type="InterPro" id="IPR005765">
    <property type="entry name" value="Ura_phspho_trans"/>
</dbReference>
<dbReference type="NCBIfam" id="NF001097">
    <property type="entry name" value="PRK00129.1"/>
    <property type="match status" value="1"/>
</dbReference>
<dbReference type="NCBIfam" id="TIGR01091">
    <property type="entry name" value="upp"/>
    <property type="match status" value="1"/>
</dbReference>
<dbReference type="PANTHER" id="PTHR32315">
    <property type="entry name" value="ADENINE PHOSPHORIBOSYLTRANSFERASE"/>
    <property type="match status" value="1"/>
</dbReference>
<dbReference type="PANTHER" id="PTHR32315:SF4">
    <property type="entry name" value="URACIL PHOSPHORIBOSYLTRANSFERASE, CHLOROPLASTIC"/>
    <property type="match status" value="1"/>
</dbReference>
<dbReference type="Pfam" id="PF14681">
    <property type="entry name" value="UPRTase"/>
    <property type="match status" value="1"/>
</dbReference>
<dbReference type="SUPFAM" id="SSF53271">
    <property type="entry name" value="PRTase-like"/>
    <property type="match status" value="1"/>
</dbReference>